<sequence length="127" mass="14346">MRHRKSGRQLNRNSSHRQAMFRNMASALIGHEIIKTTLPKAKELRRVVEPLITLAKEDSVANRRLAFARTRNVETVAKLFNELGPRFAQRAGGYTRILKCGFRAGDNAPMAYIELVDRPEVAEAATE</sequence>
<gene>
    <name evidence="1" type="primary">rplQ</name>
    <name type="ordered locus">APP7_1871</name>
</gene>
<protein>
    <recommendedName>
        <fullName evidence="1">Large ribosomal subunit protein bL17</fullName>
    </recommendedName>
    <alternativeName>
        <fullName evidence="2">50S ribosomal protein L17</fullName>
    </alternativeName>
</protein>
<accession>B3GZ37</accession>
<comment type="subunit">
    <text evidence="1">Part of the 50S ribosomal subunit. Contacts protein L32.</text>
</comment>
<comment type="similarity">
    <text evidence="1">Belongs to the bacterial ribosomal protein bL17 family.</text>
</comment>
<feature type="chain" id="PRO_1000144365" description="Large ribosomal subunit protein bL17">
    <location>
        <begin position="1"/>
        <end position="127"/>
    </location>
</feature>
<proteinExistence type="inferred from homology"/>
<organism>
    <name type="scientific">Actinobacillus pleuropneumoniae serotype 7 (strain AP76)</name>
    <dbReference type="NCBI Taxonomy" id="537457"/>
    <lineage>
        <taxon>Bacteria</taxon>
        <taxon>Pseudomonadati</taxon>
        <taxon>Pseudomonadota</taxon>
        <taxon>Gammaproteobacteria</taxon>
        <taxon>Pasteurellales</taxon>
        <taxon>Pasteurellaceae</taxon>
        <taxon>Actinobacillus</taxon>
    </lineage>
</organism>
<dbReference type="EMBL" id="CP001091">
    <property type="protein sequence ID" value="ACE62523.1"/>
    <property type="molecule type" value="Genomic_DNA"/>
</dbReference>
<dbReference type="RefSeq" id="WP_005599330.1">
    <property type="nucleotide sequence ID" value="NC_010939.1"/>
</dbReference>
<dbReference type="SMR" id="B3GZ37"/>
<dbReference type="GeneID" id="48600078"/>
<dbReference type="KEGG" id="apa:APP7_1871"/>
<dbReference type="HOGENOM" id="CLU_074407_2_0_6"/>
<dbReference type="Proteomes" id="UP000001226">
    <property type="component" value="Chromosome"/>
</dbReference>
<dbReference type="GO" id="GO:0022625">
    <property type="term" value="C:cytosolic large ribosomal subunit"/>
    <property type="evidence" value="ECO:0007669"/>
    <property type="project" value="TreeGrafter"/>
</dbReference>
<dbReference type="GO" id="GO:0003735">
    <property type="term" value="F:structural constituent of ribosome"/>
    <property type="evidence" value="ECO:0007669"/>
    <property type="project" value="InterPro"/>
</dbReference>
<dbReference type="GO" id="GO:0006412">
    <property type="term" value="P:translation"/>
    <property type="evidence" value="ECO:0007669"/>
    <property type="project" value="UniProtKB-UniRule"/>
</dbReference>
<dbReference type="FunFam" id="3.90.1030.10:FF:000001">
    <property type="entry name" value="50S ribosomal protein L17"/>
    <property type="match status" value="1"/>
</dbReference>
<dbReference type="Gene3D" id="3.90.1030.10">
    <property type="entry name" value="Ribosomal protein L17"/>
    <property type="match status" value="1"/>
</dbReference>
<dbReference type="HAMAP" id="MF_01368">
    <property type="entry name" value="Ribosomal_bL17"/>
    <property type="match status" value="1"/>
</dbReference>
<dbReference type="InterPro" id="IPR000456">
    <property type="entry name" value="Ribosomal_bL17"/>
</dbReference>
<dbReference type="InterPro" id="IPR047859">
    <property type="entry name" value="Ribosomal_bL17_CS"/>
</dbReference>
<dbReference type="InterPro" id="IPR036373">
    <property type="entry name" value="Ribosomal_bL17_sf"/>
</dbReference>
<dbReference type="NCBIfam" id="TIGR00059">
    <property type="entry name" value="L17"/>
    <property type="match status" value="1"/>
</dbReference>
<dbReference type="PANTHER" id="PTHR14413:SF16">
    <property type="entry name" value="LARGE RIBOSOMAL SUBUNIT PROTEIN BL17M"/>
    <property type="match status" value="1"/>
</dbReference>
<dbReference type="PANTHER" id="PTHR14413">
    <property type="entry name" value="RIBOSOMAL PROTEIN L17"/>
    <property type="match status" value="1"/>
</dbReference>
<dbReference type="Pfam" id="PF01196">
    <property type="entry name" value="Ribosomal_L17"/>
    <property type="match status" value="1"/>
</dbReference>
<dbReference type="SUPFAM" id="SSF64263">
    <property type="entry name" value="Prokaryotic ribosomal protein L17"/>
    <property type="match status" value="1"/>
</dbReference>
<dbReference type="PROSITE" id="PS01167">
    <property type="entry name" value="RIBOSOMAL_L17"/>
    <property type="match status" value="1"/>
</dbReference>
<evidence type="ECO:0000255" key="1">
    <source>
        <dbReference type="HAMAP-Rule" id="MF_01368"/>
    </source>
</evidence>
<evidence type="ECO:0000305" key="2"/>
<reference key="1">
    <citation type="submission" date="2008-06" db="EMBL/GenBank/DDBJ databases">
        <title>Genome and proteome analysis of A. pleuropneumoniae serotype 7.</title>
        <authorList>
            <person name="Linke B."/>
            <person name="Buettner F."/>
            <person name="Martinez-Arias R."/>
            <person name="Goesmann A."/>
            <person name="Baltes N."/>
            <person name="Tegetmeyer H."/>
            <person name="Singh M."/>
            <person name="Gerlach G.F."/>
        </authorList>
    </citation>
    <scope>NUCLEOTIDE SEQUENCE [LARGE SCALE GENOMIC DNA]</scope>
    <source>
        <strain>AP76</strain>
    </source>
</reference>
<name>RL17_ACTP7</name>
<keyword id="KW-0687">Ribonucleoprotein</keyword>
<keyword id="KW-0689">Ribosomal protein</keyword>